<comment type="function">
    <text evidence="1">Involved in the gluconeogenesis. Catalyzes stereospecifically the conversion of dihydroxyacetone phosphate (DHAP) to D-glyceraldehyde-3-phosphate (G3P).</text>
</comment>
<comment type="catalytic activity">
    <reaction evidence="1">
        <text>D-glyceraldehyde 3-phosphate = dihydroxyacetone phosphate</text>
        <dbReference type="Rhea" id="RHEA:18585"/>
        <dbReference type="ChEBI" id="CHEBI:57642"/>
        <dbReference type="ChEBI" id="CHEBI:59776"/>
        <dbReference type="EC" id="5.3.1.1"/>
    </reaction>
</comment>
<comment type="pathway">
    <text evidence="1">Carbohydrate biosynthesis; gluconeogenesis.</text>
</comment>
<comment type="pathway">
    <text evidence="1">Carbohydrate degradation; glycolysis; D-glyceraldehyde 3-phosphate from glycerone phosphate: step 1/1.</text>
</comment>
<comment type="subunit">
    <text evidence="1">Homodimer.</text>
</comment>
<comment type="subcellular location">
    <subcellularLocation>
        <location evidence="1">Cytoplasm</location>
    </subcellularLocation>
</comment>
<comment type="similarity">
    <text evidence="1">Belongs to the triosephosphate isomerase family.</text>
</comment>
<protein>
    <recommendedName>
        <fullName evidence="1">Triosephosphate isomerase</fullName>
        <shortName evidence="1">TIM</shortName>
        <shortName evidence="1">TPI</shortName>
        <ecNumber evidence="1">5.3.1.1</ecNumber>
    </recommendedName>
    <alternativeName>
        <fullName evidence="1">Triose-phosphate isomerase</fullName>
    </alternativeName>
</protein>
<reference key="1">
    <citation type="journal article" date="2003" name="J. Bacteriol.">
        <title>Comparative analyses of the complete genome sequences of Pierce's disease and citrus variegated chlorosis strains of Xylella fastidiosa.</title>
        <authorList>
            <person name="Van Sluys M.A."/>
            <person name="de Oliveira M.C."/>
            <person name="Monteiro-Vitorello C.B."/>
            <person name="Miyaki C.Y."/>
            <person name="Furlan L.R."/>
            <person name="Camargo L.E.A."/>
            <person name="da Silva A.C.R."/>
            <person name="Moon D.H."/>
            <person name="Takita M.A."/>
            <person name="Lemos E.G.M."/>
            <person name="Machado M.A."/>
            <person name="Ferro M.I.T."/>
            <person name="da Silva F.R."/>
            <person name="Goldman M.H.S."/>
            <person name="Goldman G.H."/>
            <person name="Lemos M.V.F."/>
            <person name="El-Dorry H."/>
            <person name="Tsai S.M."/>
            <person name="Carrer H."/>
            <person name="Carraro D.M."/>
            <person name="de Oliveira R.C."/>
            <person name="Nunes L.R."/>
            <person name="Siqueira W.J."/>
            <person name="Coutinho L.L."/>
            <person name="Kimura E.T."/>
            <person name="Ferro E.S."/>
            <person name="Harakava R."/>
            <person name="Kuramae E.E."/>
            <person name="Marino C.L."/>
            <person name="Giglioti E."/>
            <person name="Abreu I.L."/>
            <person name="Alves L.M.C."/>
            <person name="do Amaral A.M."/>
            <person name="Baia G.S."/>
            <person name="Blanco S.R."/>
            <person name="Brito M.S."/>
            <person name="Cannavan F.S."/>
            <person name="Celestino A.V."/>
            <person name="da Cunha A.F."/>
            <person name="Fenille R.C."/>
            <person name="Ferro J.A."/>
            <person name="Formighieri E.F."/>
            <person name="Kishi L.T."/>
            <person name="Leoni S.G."/>
            <person name="Oliveira A.R."/>
            <person name="Rosa V.E. Jr."/>
            <person name="Sassaki F.T."/>
            <person name="Sena J.A.D."/>
            <person name="de Souza A.A."/>
            <person name="Truffi D."/>
            <person name="Tsukumo F."/>
            <person name="Yanai G.M."/>
            <person name="Zaros L.G."/>
            <person name="Civerolo E.L."/>
            <person name="Simpson A.J.G."/>
            <person name="Almeida N.F. Jr."/>
            <person name="Setubal J.C."/>
            <person name="Kitajima J.P."/>
        </authorList>
    </citation>
    <scope>NUCLEOTIDE SEQUENCE [LARGE SCALE GENOMIC DNA]</scope>
    <source>
        <strain>Temecula1 / ATCC 700964</strain>
    </source>
</reference>
<name>TPIS_XYLFT</name>
<keyword id="KW-0963">Cytoplasm</keyword>
<keyword id="KW-0312">Gluconeogenesis</keyword>
<keyword id="KW-0324">Glycolysis</keyword>
<keyword id="KW-0413">Isomerase</keyword>
<keyword id="KW-1185">Reference proteome</keyword>
<dbReference type="EC" id="5.3.1.1" evidence="1"/>
<dbReference type="EMBL" id="AE009442">
    <property type="protein sequence ID" value="AAO28132.1"/>
    <property type="molecule type" value="Genomic_DNA"/>
</dbReference>
<dbReference type="RefSeq" id="WP_004087940.1">
    <property type="nucleotide sequence ID" value="NC_004556.1"/>
</dbReference>
<dbReference type="SMR" id="Q87EQ7"/>
<dbReference type="GeneID" id="93903945"/>
<dbReference type="KEGG" id="xft:PD_0245"/>
<dbReference type="HOGENOM" id="CLU_024251_2_3_6"/>
<dbReference type="UniPathway" id="UPA00109">
    <property type="reaction ID" value="UER00189"/>
</dbReference>
<dbReference type="UniPathway" id="UPA00138"/>
<dbReference type="Proteomes" id="UP000002516">
    <property type="component" value="Chromosome"/>
</dbReference>
<dbReference type="GO" id="GO:0005829">
    <property type="term" value="C:cytosol"/>
    <property type="evidence" value="ECO:0007669"/>
    <property type="project" value="TreeGrafter"/>
</dbReference>
<dbReference type="GO" id="GO:0004807">
    <property type="term" value="F:triose-phosphate isomerase activity"/>
    <property type="evidence" value="ECO:0007669"/>
    <property type="project" value="UniProtKB-UniRule"/>
</dbReference>
<dbReference type="GO" id="GO:0006094">
    <property type="term" value="P:gluconeogenesis"/>
    <property type="evidence" value="ECO:0007669"/>
    <property type="project" value="UniProtKB-UniRule"/>
</dbReference>
<dbReference type="GO" id="GO:0046166">
    <property type="term" value="P:glyceraldehyde-3-phosphate biosynthetic process"/>
    <property type="evidence" value="ECO:0007669"/>
    <property type="project" value="TreeGrafter"/>
</dbReference>
<dbReference type="GO" id="GO:0019563">
    <property type="term" value="P:glycerol catabolic process"/>
    <property type="evidence" value="ECO:0007669"/>
    <property type="project" value="TreeGrafter"/>
</dbReference>
<dbReference type="GO" id="GO:0006096">
    <property type="term" value="P:glycolytic process"/>
    <property type="evidence" value="ECO:0007669"/>
    <property type="project" value="UniProtKB-UniRule"/>
</dbReference>
<dbReference type="CDD" id="cd00311">
    <property type="entry name" value="TIM"/>
    <property type="match status" value="1"/>
</dbReference>
<dbReference type="FunFam" id="3.20.20.70:FF:000016">
    <property type="entry name" value="Triosephosphate isomerase"/>
    <property type="match status" value="1"/>
</dbReference>
<dbReference type="Gene3D" id="3.20.20.70">
    <property type="entry name" value="Aldolase class I"/>
    <property type="match status" value="1"/>
</dbReference>
<dbReference type="HAMAP" id="MF_00147_B">
    <property type="entry name" value="TIM_B"/>
    <property type="match status" value="1"/>
</dbReference>
<dbReference type="InterPro" id="IPR013785">
    <property type="entry name" value="Aldolase_TIM"/>
</dbReference>
<dbReference type="InterPro" id="IPR035990">
    <property type="entry name" value="TIM_sf"/>
</dbReference>
<dbReference type="InterPro" id="IPR022896">
    <property type="entry name" value="TrioseP_Isoase_bac/euk"/>
</dbReference>
<dbReference type="InterPro" id="IPR000652">
    <property type="entry name" value="Triosephosphate_isomerase"/>
</dbReference>
<dbReference type="InterPro" id="IPR020861">
    <property type="entry name" value="Triosephosphate_isomerase_AS"/>
</dbReference>
<dbReference type="NCBIfam" id="TIGR00419">
    <property type="entry name" value="tim"/>
    <property type="match status" value="1"/>
</dbReference>
<dbReference type="PANTHER" id="PTHR21139">
    <property type="entry name" value="TRIOSEPHOSPHATE ISOMERASE"/>
    <property type="match status" value="1"/>
</dbReference>
<dbReference type="PANTHER" id="PTHR21139:SF42">
    <property type="entry name" value="TRIOSEPHOSPHATE ISOMERASE"/>
    <property type="match status" value="1"/>
</dbReference>
<dbReference type="Pfam" id="PF00121">
    <property type="entry name" value="TIM"/>
    <property type="match status" value="1"/>
</dbReference>
<dbReference type="SUPFAM" id="SSF51351">
    <property type="entry name" value="Triosephosphate isomerase (TIM)"/>
    <property type="match status" value="1"/>
</dbReference>
<dbReference type="PROSITE" id="PS00171">
    <property type="entry name" value="TIM_1"/>
    <property type="match status" value="1"/>
</dbReference>
<dbReference type="PROSITE" id="PS51440">
    <property type="entry name" value="TIM_2"/>
    <property type="match status" value="1"/>
</dbReference>
<sequence>MRPKIVAGNWKLHGSHAFAQALVAQVAAGLPLPGVSVIILPPLLYLSDLAQRFKGEGLAFGAQNVSHHDKGAYTGEVSAAMVADVGAHYTLVGHSERREYHHEDSELVARKFAAALSAGLRPILCVGESLPQREAGQAEVAIAMQLAPVLALVGPQGVARGLIAYEPVWAIGTGRHADPSQVQAMHAFIRGEIARQDARIGDSLLILYGGGIKPCNAAELFSQQDVDGGLIGGASLVADDFLAIARATV</sequence>
<accession>Q87EQ7</accession>
<proteinExistence type="inferred from homology"/>
<feature type="chain" id="PRO_0000090325" description="Triosephosphate isomerase">
    <location>
        <begin position="1"/>
        <end position="249"/>
    </location>
</feature>
<feature type="active site" description="Electrophile" evidence="1">
    <location>
        <position position="94"/>
    </location>
</feature>
<feature type="active site" description="Proton acceptor" evidence="1">
    <location>
        <position position="166"/>
    </location>
</feature>
<feature type="binding site" evidence="1">
    <location>
        <begin position="9"/>
        <end position="11"/>
    </location>
    <ligand>
        <name>substrate</name>
    </ligand>
</feature>
<feature type="binding site" evidence="1">
    <location>
        <position position="172"/>
    </location>
    <ligand>
        <name>substrate</name>
    </ligand>
</feature>
<feature type="binding site" evidence="1">
    <location>
        <begin position="232"/>
        <end position="233"/>
    </location>
    <ligand>
        <name>substrate</name>
    </ligand>
</feature>
<organism>
    <name type="scientific">Xylella fastidiosa (strain Temecula1 / ATCC 700964)</name>
    <dbReference type="NCBI Taxonomy" id="183190"/>
    <lineage>
        <taxon>Bacteria</taxon>
        <taxon>Pseudomonadati</taxon>
        <taxon>Pseudomonadota</taxon>
        <taxon>Gammaproteobacteria</taxon>
        <taxon>Lysobacterales</taxon>
        <taxon>Lysobacteraceae</taxon>
        <taxon>Xylella</taxon>
    </lineage>
</organism>
<evidence type="ECO:0000255" key="1">
    <source>
        <dbReference type="HAMAP-Rule" id="MF_00147"/>
    </source>
</evidence>
<gene>
    <name evidence="1" type="primary">tpiA</name>
    <name type="ordered locus">PD_0245</name>
</gene>